<name>ABCGL_DICDI</name>
<reference key="1">
    <citation type="journal article" date="2002" name="Eukaryot. Cell">
        <title>Evolutionary analyses of ABC transporters of Dictyostelium discoideum.</title>
        <authorList>
            <person name="Anjard C."/>
            <person name="Loomis W.F."/>
        </authorList>
    </citation>
    <scope>NUCLEOTIDE SEQUENCE [GENOMIC DNA]</scope>
    <scope>NOMENCLATURE</scope>
    <source>
        <strain>AX4</strain>
    </source>
</reference>
<reference key="2">
    <citation type="journal article" date="2005" name="Nature">
        <title>The genome of the social amoeba Dictyostelium discoideum.</title>
        <authorList>
            <person name="Eichinger L."/>
            <person name="Pachebat J.A."/>
            <person name="Gloeckner G."/>
            <person name="Rajandream M.A."/>
            <person name="Sucgang R."/>
            <person name="Berriman M."/>
            <person name="Song J."/>
            <person name="Olsen R."/>
            <person name="Szafranski K."/>
            <person name="Xu Q."/>
            <person name="Tunggal B."/>
            <person name="Kummerfeld S."/>
            <person name="Madera M."/>
            <person name="Konfortov B.A."/>
            <person name="Rivero F."/>
            <person name="Bankier A.T."/>
            <person name="Lehmann R."/>
            <person name="Hamlin N."/>
            <person name="Davies R."/>
            <person name="Gaudet P."/>
            <person name="Fey P."/>
            <person name="Pilcher K."/>
            <person name="Chen G."/>
            <person name="Saunders D."/>
            <person name="Sodergren E.J."/>
            <person name="Davis P."/>
            <person name="Kerhornou A."/>
            <person name="Nie X."/>
            <person name="Hall N."/>
            <person name="Anjard C."/>
            <person name="Hemphill L."/>
            <person name="Bason N."/>
            <person name="Farbrother P."/>
            <person name="Desany B."/>
            <person name="Just E."/>
            <person name="Morio T."/>
            <person name="Rost R."/>
            <person name="Churcher C.M."/>
            <person name="Cooper J."/>
            <person name="Haydock S."/>
            <person name="van Driessche N."/>
            <person name="Cronin A."/>
            <person name="Goodhead I."/>
            <person name="Muzny D.M."/>
            <person name="Mourier T."/>
            <person name="Pain A."/>
            <person name="Lu M."/>
            <person name="Harper D."/>
            <person name="Lindsay R."/>
            <person name="Hauser H."/>
            <person name="James K.D."/>
            <person name="Quiles M."/>
            <person name="Madan Babu M."/>
            <person name="Saito T."/>
            <person name="Buchrieser C."/>
            <person name="Wardroper A."/>
            <person name="Felder M."/>
            <person name="Thangavelu M."/>
            <person name="Johnson D."/>
            <person name="Knights A."/>
            <person name="Loulseged H."/>
            <person name="Mungall K.L."/>
            <person name="Oliver K."/>
            <person name="Price C."/>
            <person name="Quail M.A."/>
            <person name="Urushihara H."/>
            <person name="Hernandez J."/>
            <person name="Rabbinowitsch E."/>
            <person name="Steffen D."/>
            <person name="Sanders M."/>
            <person name="Ma J."/>
            <person name="Kohara Y."/>
            <person name="Sharp S."/>
            <person name="Simmonds M.N."/>
            <person name="Spiegler S."/>
            <person name="Tivey A."/>
            <person name="Sugano S."/>
            <person name="White B."/>
            <person name="Walker D."/>
            <person name="Woodward J.R."/>
            <person name="Winckler T."/>
            <person name="Tanaka Y."/>
            <person name="Shaulsky G."/>
            <person name="Schleicher M."/>
            <person name="Weinstock G.M."/>
            <person name="Rosenthal A."/>
            <person name="Cox E.C."/>
            <person name="Chisholm R.L."/>
            <person name="Gibbs R.A."/>
            <person name="Loomis W.F."/>
            <person name="Platzer M."/>
            <person name="Kay R.R."/>
            <person name="Williams J.G."/>
            <person name="Dear P.H."/>
            <person name="Noegel A.A."/>
            <person name="Barrell B.G."/>
            <person name="Kuspa A."/>
        </authorList>
    </citation>
    <scope>NUCLEOTIDE SEQUENCE [LARGE SCALE GENOMIC DNA]</scope>
    <source>
        <strain>AX4</strain>
    </source>
</reference>
<dbReference type="EMBL" id="AF482398">
    <property type="protein sequence ID" value="AAL91505.1"/>
    <property type="molecule type" value="Genomic_DNA"/>
</dbReference>
<dbReference type="EMBL" id="AAFI02000005">
    <property type="protein sequence ID" value="EAL71953.1"/>
    <property type="molecule type" value="Genomic_DNA"/>
</dbReference>
<dbReference type="RefSeq" id="XP_646646.1">
    <property type="nucleotide sequence ID" value="XM_641554.1"/>
</dbReference>
<dbReference type="SMR" id="Q8T673"/>
<dbReference type="FunCoup" id="Q8T673">
    <property type="interactions" value="7"/>
</dbReference>
<dbReference type="STRING" id="44689.Q8T673"/>
<dbReference type="PaxDb" id="44689-DDB0191239"/>
<dbReference type="EnsemblProtists" id="EAL71953">
    <property type="protein sequence ID" value="EAL71953"/>
    <property type="gene ID" value="DDB_G0269206"/>
</dbReference>
<dbReference type="GeneID" id="8617618"/>
<dbReference type="KEGG" id="ddi:DDB_G0269206"/>
<dbReference type="dictyBase" id="DDB_G0269206">
    <property type="gene designation" value="abcG21"/>
</dbReference>
<dbReference type="VEuPathDB" id="AmoebaDB:DDB_G0269206"/>
<dbReference type="eggNOG" id="KOG0065">
    <property type="taxonomic scope" value="Eukaryota"/>
</dbReference>
<dbReference type="HOGENOM" id="CLU_000604_35_0_1"/>
<dbReference type="InParanoid" id="Q8T673"/>
<dbReference type="OMA" id="RMNLINP"/>
<dbReference type="PhylomeDB" id="Q8T673"/>
<dbReference type="PRO" id="PR:Q8T673"/>
<dbReference type="Proteomes" id="UP000002195">
    <property type="component" value="Chromosome 1"/>
</dbReference>
<dbReference type="GO" id="GO:0016020">
    <property type="term" value="C:membrane"/>
    <property type="evidence" value="ECO:0007669"/>
    <property type="project" value="UniProtKB-SubCell"/>
</dbReference>
<dbReference type="GO" id="GO:0140359">
    <property type="term" value="F:ABC-type transporter activity"/>
    <property type="evidence" value="ECO:0007669"/>
    <property type="project" value="InterPro"/>
</dbReference>
<dbReference type="GO" id="GO:0005524">
    <property type="term" value="F:ATP binding"/>
    <property type="evidence" value="ECO:0007669"/>
    <property type="project" value="UniProtKB-KW"/>
</dbReference>
<dbReference type="GO" id="GO:0016887">
    <property type="term" value="F:ATP hydrolysis activity"/>
    <property type="evidence" value="ECO:0007669"/>
    <property type="project" value="InterPro"/>
</dbReference>
<dbReference type="GO" id="GO:0042626">
    <property type="term" value="F:ATPase-coupled transmembrane transporter activity"/>
    <property type="evidence" value="ECO:0000317"/>
    <property type="project" value="dictyBase"/>
</dbReference>
<dbReference type="GO" id="GO:0031152">
    <property type="term" value="P:aggregation involved in sorocarp development"/>
    <property type="evidence" value="ECO:0000318"/>
    <property type="project" value="GO_Central"/>
</dbReference>
<dbReference type="GO" id="GO:0006972">
    <property type="term" value="P:hyperosmotic response"/>
    <property type="evidence" value="ECO:0000270"/>
    <property type="project" value="dictyBase"/>
</dbReference>
<dbReference type="GO" id="GO:0031288">
    <property type="term" value="P:sorocarp morphogenesis"/>
    <property type="evidence" value="ECO:0000318"/>
    <property type="project" value="GO_Central"/>
</dbReference>
<dbReference type="CDD" id="cd03233">
    <property type="entry name" value="ABCG_PDR_domain1"/>
    <property type="match status" value="1"/>
</dbReference>
<dbReference type="CDD" id="cd03232">
    <property type="entry name" value="ABCG_PDR_domain2"/>
    <property type="match status" value="1"/>
</dbReference>
<dbReference type="FunFam" id="3.40.50.300:FF:000054">
    <property type="entry name" value="ABC multidrug transporter atrF"/>
    <property type="match status" value="1"/>
</dbReference>
<dbReference type="FunFam" id="3.40.50.300:FF:002175">
    <property type="entry name" value="ABC transporter G family member 9"/>
    <property type="match status" value="1"/>
</dbReference>
<dbReference type="Gene3D" id="3.40.50.300">
    <property type="entry name" value="P-loop containing nucleotide triphosphate hydrolases"/>
    <property type="match status" value="2"/>
</dbReference>
<dbReference type="InterPro" id="IPR003593">
    <property type="entry name" value="AAA+_ATPase"/>
</dbReference>
<dbReference type="InterPro" id="IPR013525">
    <property type="entry name" value="ABC2_TM"/>
</dbReference>
<dbReference type="InterPro" id="IPR029481">
    <property type="entry name" value="ABC_trans_N"/>
</dbReference>
<dbReference type="InterPro" id="IPR003439">
    <property type="entry name" value="ABC_transporter-like_ATP-bd"/>
</dbReference>
<dbReference type="InterPro" id="IPR043926">
    <property type="entry name" value="ABCG_dom"/>
</dbReference>
<dbReference type="InterPro" id="IPR034001">
    <property type="entry name" value="ABCG_PDR_1"/>
</dbReference>
<dbReference type="InterPro" id="IPR034003">
    <property type="entry name" value="ABCG_PDR_2"/>
</dbReference>
<dbReference type="InterPro" id="IPR027417">
    <property type="entry name" value="P-loop_NTPase"/>
</dbReference>
<dbReference type="InterPro" id="IPR010929">
    <property type="entry name" value="PDR_CDR_ABC"/>
</dbReference>
<dbReference type="PANTHER" id="PTHR19241">
    <property type="entry name" value="ATP-BINDING CASSETTE TRANSPORTER"/>
    <property type="match status" value="1"/>
</dbReference>
<dbReference type="Pfam" id="PF01061">
    <property type="entry name" value="ABC2_membrane"/>
    <property type="match status" value="2"/>
</dbReference>
<dbReference type="Pfam" id="PF19055">
    <property type="entry name" value="ABC2_membrane_7"/>
    <property type="match status" value="1"/>
</dbReference>
<dbReference type="Pfam" id="PF00005">
    <property type="entry name" value="ABC_tran"/>
    <property type="match status" value="2"/>
</dbReference>
<dbReference type="Pfam" id="PF14510">
    <property type="entry name" value="ABC_trans_N"/>
    <property type="match status" value="1"/>
</dbReference>
<dbReference type="Pfam" id="PF06422">
    <property type="entry name" value="PDR_CDR"/>
    <property type="match status" value="1"/>
</dbReference>
<dbReference type="SMART" id="SM00382">
    <property type="entry name" value="AAA"/>
    <property type="match status" value="2"/>
</dbReference>
<dbReference type="SUPFAM" id="SSF52540">
    <property type="entry name" value="P-loop containing nucleoside triphosphate hydrolases"/>
    <property type="match status" value="2"/>
</dbReference>
<dbReference type="PROSITE" id="PS50893">
    <property type="entry name" value="ABC_TRANSPORTER_2"/>
    <property type="match status" value="2"/>
</dbReference>
<gene>
    <name type="primary">abcG21</name>
    <name type="synonym">abcG13</name>
    <name type="ORF">DDB_G0269206</name>
</gene>
<organism>
    <name type="scientific">Dictyostelium discoideum</name>
    <name type="common">Social amoeba</name>
    <dbReference type="NCBI Taxonomy" id="44689"/>
    <lineage>
        <taxon>Eukaryota</taxon>
        <taxon>Amoebozoa</taxon>
        <taxon>Evosea</taxon>
        <taxon>Eumycetozoa</taxon>
        <taxon>Dictyostelia</taxon>
        <taxon>Dictyosteliales</taxon>
        <taxon>Dictyosteliaceae</taxon>
        <taxon>Dictyostelium</taxon>
    </lineage>
</organism>
<evidence type="ECO:0000255" key="1"/>
<evidence type="ECO:0000255" key="2">
    <source>
        <dbReference type="PROSITE-ProRule" id="PRU00434"/>
    </source>
</evidence>
<evidence type="ECO:0000256" key="3">
    <source>
        <dbReference type="SAM" id="MobiDB-lite"/>
    </source>
</evidence>
<evidence type="ECO:0000305" key="4"/>
<comment type="subcellular location">
    <subcellularLocation>
        <location evidence="4">Membrane</location>
        <topology evidence="4">Multi-pass membrane protein</topology>
    </subcellularLocation>
</comment>
<comment type="similarity">
    <text evidence="4">Belongs to the ABC transporter superfamily. ABCG family. PDR (TC 3.A.1.205) subfamily.</text>
</comment>
<keyword id="KW-0067">ATP-binding</keyword>
<keyword id="KW-0472">Membrane</keyword>
<keyword id="KW-0547">Nucleotide-binding</keyword>
<keyword id="KW-1185">Reference proteome</keyword>
<keyword id="KW-0677">Repeat</keyword>
<keyword id="KW-0812">Transmembrane</keyword>
<keyword id="KW-1133">Transmembrane helix</keyword>
<keyword id="KW-0813">Transport</keyword>
<feature type="chain" id="PRO_0000391404" description="ABC transporter G family member 21">
    <location>
        <begin position="1"/>
        <end position="1449"/>
    </location>
</feature>
<feature type="transmembrane region" description="Helical" evidence="1">
    <location>
        <begin position="519"/>
        <end position="539"/>
    </location>
</feature>
<feature type="transmembrane region" description="Helical" evidence="1">
    <location>
        <begin position="577"/>
        <end position="597"/>
    </location>
</feature>
<feature type="transmembrane region" description="Helical" evidence="1">
    <location>
        <begin position="602"/>
        <end position="622"/>
    </location>
</feature>
<feature type="transmembrane region" description="Helical" evidence="1">
    <location>
        <begin position="634"/>
        <end position="654"/>
    </location>
</feature>
<feature type="transmembrane region" description="Helical" evidence="1">
    <location>
        <begin position="747"/>
        <end position="767"/>
    </location>
</feature>
<feature type="transmembrane region" description="Helical" evidence="1">
    <location>
        <begin position="1155"/>
        <end position="1175"/>
    </location>
</feature>
<feature type="transmembrane region" description="Helical" evidence="1">
    <location>
        <begin position="1188"/>
        <end position="1208"/>
    </location>
</feature>
<feature type="transmembrane region" description="Helical" evidence="1">
    <location>
        <begin position="1228"/>
        <end position="1248"/>
    </location>
</feature>
<feature type="transmembrane region" description="Helical" evidence="1">
    <location>
        <begin position="1266"/>
        <end position="1286"/>
    </location>
</feature>
<feature type="transmembrane region" description="Helical" evidence="1">
    <location>
        <begin position="1296"/>
        <end position="1316"/>
    </location>
</feature>
<feature type="transmembrane region" description="Helical" evidence="1">
    <location>
        <begin position="1423"/>
        <end position="1443"/>
    </location>
</feature>
<feature type="domain" description="ABC transporter 1" evidence="2">
    <location>
        <begin position="130"/>
        <end position="383"/>
    </location>
</feature>
<feature type="domain" description="ABC transmembrane type-2 1">
    <location>
        <begin position="488"/>
        <end position="731"/>
    </location>
</feature>
<feature type="domain" description="ABC transporter 2" evidence="2">
    <location>
        <begin position="818"/>
        <end position="1062"/>
    </location>
</feature>
<feature type="domain" description="ABC transmembrane type-2 2">
    <location>
        <begin position="1152"/>
        <end position="1386"/>
    </location>
</feature>
<feature type="region of interest" description="Disordered" evidence="3">
    <location>
        <begin position="1"/>
        <end position="49"/>
    </location>
</feature>
<feature type="compositionally biased region" description="Basic and acidic residues" evidence="3">
    <location>
        <begin position="1"/>
        <end position="10"/>
    </location>
</feature>
<feature type="compositionally biased region" description="Polar residues" evidence="3">
    <location>
        <begin position="14"/>
        <end position="25"/>
    </location>
</feature>
<feature type="binding site" evidence="2">
    <location>
        <begin position="854"/>
        <end position="861"/>
    </location>
    <ligand>
        <name>ATP</name>
        <dbReference type="ChEBI" id="CHEBI:30616"/>
    </ligand>
</feature>
<accession>Q8T673</accession>
<accession>Q55C35</accession>
<sequence>MEEYELREIALQEGGSNLDINTPPNYDNPVGDGSSPPDSPDIQKSENQFKNVERELEIDSKQYLAGHDAENNHDENDEDFKLRRYFENSQRMALGNGQKPKKMGVSIRNLTVVGRGADQSVIADMSTPFISFFNLFKPSTWKEKGSTFDILHDITLFNRDGGMLLVLGRPGSGCSTLLRLISNQRGSYVEVKGDIKYGGIPAKEWKRYQGESIYTPEEDTHHPTLTVRQTLDFALKCKTIHNRLPDEKKRTYRQKIFDLLLGMFGIVHQADTIVGNEFIRGLSGGERKRLTITEAMVSSASITCYDCSTRGLDAASALDYAKSIRIMSDTLDKTTIASFYQASDSIYNLFDNVAIIEKGRLIYFGPGNKAKQYFIDLGFDCEPRKSTPDFLTGVTNPQERIIRQGFEGRVPETSADFEAAWRNSSMYRDMLEEQKEYERKIEIEQPAVDFIQEVKAEKSRTTPKRSIYTTSYITQVKALIVRNSQIIWGDKFSLISRYLSVFTQSFVYGSIFFQMEKTIPGLFTRGGAIFSAILFNAFLSEAELPLTMYGRRILQKQRSYAMYRPSALHIAQIVTDIPLTMIQVFLFSIVVYFMFGLQYNAGKFFIFCFTLVGATLATTNLFRVFGNFSPSLYISQNVMNVILIFMITYCGYTIPKPKMHPWFAWFYWANPFSYAFKALMANEFGDLSFDCHDTAIPFDPKNPTRYDNDYRVCASPGAVEGILSVEGKDYLDQYLHFRSDDLTQNVFITYLWWVLFTAMNMFAMEYFDWTGGGYSHKVYKKGKAPKMNDAEEEKKQNQIVANATSKMKDTLKMRGGIFTWQNINYTVPVKGGKRLLLDNVEGWIKPGQMTALMGSSGAGKTTLLDVLAKRKTMGEVQGKCFLNGKPLEIDFERITGYVEQMDVHNPGLTVREALRFSAKLRQEPSVSLEEKFDYVEHVLEMMEMKHLGDALIGTLETGVGISVEERKRLTIGVELVAKPHILFLDEPTSGLDAQSSYNIVKFIRKLADAGMPLVCTIHQPSSVLFEHFDRILLLAKGGKTVYFGDIGERSKTLTSYFERYGVRPCTESENPAEYILEATGAGVHGKSDVNWPETWKQSPELQEIERELAALEAAGPSSTEDHGKPREFATSVWYQTIEVYKRLNLIWWRDPFYTYGSFIQSALAGLIIGFTFWSLQGSSSDMNQRVFFIFEALILGILLIFVVLPQFIMQKEYFKRDFASKFYSWFPFAISIVVVELPFITVSGTIFFFCSFWTAGLNTEYNDINFYFWFIFILFLYFCVSFGQAVAAICFNMFLAHTLIPLLIVFLFLFCGVMVIPSSIPTFWRGWVYHLNPCRYFMEGIVTNVLKHTDVKCTSEDFTHFTNPEAVNGVTCKQYFPISEPLTGYVEAINEGDESKCGYCLYNNGEEYYNTLGWSFDNRWRNLALIICFWIFNTLMVITFVYITRKPRR</sequence>
<protein>
    <recommendedName>
        <fullName>ABC transporter G family member 21</fullName>
    </recommendedName>
    <alternativeName>
        <fullName>ABC transporter ABCG.21</fullName>
    </alternativeName>
</protein>
<proteinExistence type="inferred from homology"/>